<accession>Q6NTS3</accession>
<gene>
    <name type="primary">mrps24-a</name>
</gene>
<name>RT24A_XENLA</name>
<feature type="transit peptide" description="Mitochondrion" evidence="2">
    <location>
        <begin position="1"/>
        <end position="30"/>
    </location>
</feature>
<feature type="chain" id="PRO_0000273069" description="Small ribosomal subunit protein uS3mA">
    <location>
        <begin position="31"/>
        <end position="170"/>
    </location>
</feature>
<protein>
    <recommendedName>
        <fullName evidence="3">Small ribosomal subunit protein uS3mA</fullName>
    </recommendedName>
    <alternativeName>
        <fullName>28S ribosomal protein S24-A, mitochondrial</fullName>
        <shortName>MRP-S24-A</shortName>
        <shortName>S24mt-A</shortName>
    </alternativeName>
</protein>
<comment type="subunit">
    <text evidence="1">Component of the mitochondrial ribosome small subunit (28S) which comprises a 12S rRNA and about 30 distinct proteins.</text>
</comment>
<comment type="subcellular location">
    <subcellularLocation>
        <location evidence="1">Mitochondrion</location>
    </subcellularLocation>
</comment>
<comment type="similarity">
    <text evidence="3">Belongs to the universal ribosomal protein uS3 family.</text>
</comment>
<evidence type="ECO:0000250" key="1">
    <source>
        <dbReference type="UniProtKB" id="Q2M2T7"/>
    </source>
</evidence>
<evidence type="ECO:0000255" key="2"/>
<evidence type="ECO:0000305" key="3"/>
<proteinExistence type="evidence at transcript level"/>
<keyword id="KW-0496">Mitochondrion</keyword>
<keyword id="KW-1185">Reference proteome</keyword>
<keyword id="KW-0687">Ribonucleoprotein</keyword>
<keyword id="KW-0689">Ribosomal protein</keyword>
<keyword id="KW-0809">Transit peptide</keyword>
<dbReference type="EMBL" id="BC068882">
    <property type="protein sequence ID" value="AAH68882.1"/>
    <property type="molecule type" value="mRNA"/>
</dbReference>
<dbReference type="RefSeq" id="NP_001084559.1">
    <property type="nucleotide sequence ID" value="NM_001091090.1"/>
</dbReference>
<dbReference type="SMR" id="Q6NTS3"/>
<dbReference type="DNASU" id="414509"/>
<dbReference type="GeneID" id="414509"/>
<dbReference type="KEGG" id="xla:414509"/>
<dbReference type="AGR" id="Xenbase:XB-GENE-960281"/>
<dbReference type="CTD" id="414509"/>
<dbReference type="Xenbase" id="XB-GENE-960281">
    <property type="gene designation" value="mrps24.S"/>
</dbReference>
<dbReference type="OMA" id="FLQGYTE"/>
<dbReference type="OrthoDB" id="5950413at2759"/>
<dbReference type="Proteomes" id="UP000186698">
    <property type="component" value="Chromosome 3S"/>
</dbReference>
<dbReference type="Bgee" id="414509">
    <property type="expression patterns" value="Expressed in neurula embryo and 19 other cell types or tissues"/>
</dbReference>
<dbReference type="GO" id="GO:0005763">
    <property type="term" value="C:mitochondrial small ribosomal subunit"/>
    <property type="evidence" value="ECO:0000250"/>
    <property type="project" value="UniProtKB"/>
</dbReference>
<dbReference type="GO" id="GO:0003735">
    <property type="term" value="F:structural constituent of ribosome"/>
    <property type="evidence" value="ECO:0000250"/>
    <property type="project" value="UniProtKB"/>
</dbReference>
<dbReference type="GO" id="GO:0032543">
    <property type="term" value="P:mitochondrial translation"/>
    <property type="evidence" value="ECO:0000250"/>
    <property type="project" value="UniProtKB"/>
</dbReference>
<dbReference type="InterPro" id="IPR026146">
    <property type="entry name" value="Ribosomal_uS3m"/>
</dbReference>
<dbReference type="PANTHER" id="PTHR21244">
    <property type="entry name" value="MITOCHONDRIAL 28S RIBOSOMAL PROTEIN S24"/>
    <property type="match status" value="1"/>
</dbReference>
<dbReference type="PANTHER" id="PTHR21244:SF1">
    <property type="entry name" value="SMALL RIBOSOMAL SUBUNIT PROTEIN US3M"/>
    <property type="match status" value="1"/>
</dbReference>
<dbReference type="Pfam" id="PF14955">
    <property type="entry name" value="MRP-S24"/>
    <property type="match status" value="1"/>
</dbReference>
<reference key="1">
    <citation type="submission" date="2004-04" db="EMBL/GenBank/DDBJ databases">
        <authorList>
            <consortium name="NIH - Xenopus Gene Collection (XGC) project"/>
        </authorList>
    </citation>
    <scope>NUCLEOTIDE SEQUENCE [LARGE SCALE MRNA]</scope>
    <source>
        <tissue>Embryo</tissue>
    </source>
</reference>
<sequence length="170" mass="19339">MAAPVMSALGRLQGLIRTERSLLTHVQSRCIQTTSVCLKNRAARVRVGKGDKPVTYEAAHPPHYIAHRKGWLSQHTGNLDGEGGAAERTIEDVFIRRFIFGTFHGCLANEIVIKRRANLLIICAIFIRKMPTQKFYFLIGYTETLLSFLYKCPVKLEVQTVEEKVIYKYL</sequence>
<organism>
    <name type="scientific">Xenopus laevis</name>
    <name type="common">African clawed frog</name>
    <dbReference type="NCBI Taxonomy" id="8355"/>
    <lineage>
        <taxon>Eukaryota</taxon>
        <taxon>Metazoa</taxon>
        <taxon>Chordata</taxon>
        <taxon>Craniata</taxon>
        <taxon>Vertebrata</taxon>
        <taxon>Euteleostomi</taxon>
        <taxon>Amphibia</taxon>
        <taxon>Batrachia</taxon>
        <taxon>Anura</taxon>
        <taxon>Pipoidea</taxon>
        <taxon>Pipidae</taxon>
        <taxon>Xenopodinae</taxon>
        <taxon>Xenopus</taxon>
        <taxon>Xenopus</taxon>
    </lineage>
</organism>